<comment type="function">
    <text evidence="1">One of the primary rRNA binding proteins. Required for association of the 30S and 50S subunits to form the 70S ribosome, for tRNA binding and peptide bond formation. It has been suggested to have peptidyltransferase activity; this is somewhat controversial. Makes several contacts with the 16S rRNA in the 70S ribosome.</text>
</comment>
<comment type="subunit">
    <text evidence="1">Part of the 50S ribosomal subunit. Forms a bridge to the 30S subunit in the 70S ribosome.</text>
</comment>
<comment type="similarity">
    <text evidence="1">Belongs to the universal ribosomal protein uL2 family.</text>
</comment>
<sequence length="276" mass="30103">MALVKTKPTSPGRRSMVKVVNPDLHKGAPHAPLLEKQFQKSGRNNNGHITTRHKGGGHKHHYRIVDFKRNDKDGIPAKIERLEYDPNRSANIALVLFADGERRYIIAPKGAVVGQAVANGPEAPIKAGNNLPIRNIPVGTTIHCVEILPGKGAQIARSAGTSAVLLAREGIYAQVRLRSGEVRRVHIECRATIGEVGNEEHSLRQIGKAGATRWRGIRPTVRGVAMNPVDHPHGGGEGKTAAGRDPVSPWGTPTKGYRTRSNKRTTSMIVQRRHKR</sequence>
<protein>
    <recommendedName>
        <fullName evidence="1">Large ribosomal subunit protein uL2</fullName>
    </recommendedName>
    <alternativeName>
        <fullName evidence="3">50S ribosomal protein L2</fullName>
    </alternativeName>
</protein>
<dbReference type="EMBL" id="AL646052">
    <property type="protein sequence ID" value="CAD16725.1"/>
    <property type="molecule type" value="Genomic_DNA"/>
</dbReference>
<dbReference type="RefSeq" id="WP_011002915.1">
    <property type="nucleotide sequence ID" value="NC_003295.1"/>
</dbReference>
<dbReference type="SMR" id="Q8XV15"/>
<dbReference type="STRING" id="267608.RSc3016"/>
<dbReference type="EnsemblBacteria" id="CAD16725">
    <property type="protein sequence ID" value="CAD16725"/>
    <property type="gene ID" value="RSc3016"/>
</dbReference>
<dbReference type="GeneID" id="93851182"/>
<dbReference type="KEGG" id="rso:RSc3016"/>
<dbReference type="eggNOG" id="COG0090">
    <property type="taxonomic scope" value="Bacteria"/>
</dbReference>
<dbReference type="HOGENOM" id="CLU_036235_2_1_4"/>
<dbReference type="Proteomes" id="UP000001436">
    <property type="component" value="Chromosome"/>
</dbReference>
<dbReference type="GO" id="GO:0015934">
    <property type="term" value="C:large ribosomal subunit"/>
    <property type="evidence" value="ECO:0007669"/>
    <property type="project" value="InterPro"/>
</dbReference>
<dbReference type="GO" id="GO:0019843">
    <property type="term" value="F:rRNA binding"/>
    <property type="evidence" value="ECO:0007669"/>
    <property type="project" value="UniProtKB-UniRule"/>
</dbReference>
<dbReference type="GO" id="GO:0003735">
    <property type="term" value="F:structural constituent of ribosome"/>
    <property type="evidence" value="ECO:0007669"/>
    <property type="project" value="InterPro"/>
</dbReference>
<dbReference type="GO" id="GO:0016740">
    <property type="term" value="F:transferase activity"/>
    <property type="evidence" value="ECO:0007669"/>
    <property type="project" value="InterPro"/>
</dbReference>
<dbReference type="GO" id="GO:0002181">
    <property type="term" value="P:cytoplasmic translation"/>
    <property type="evidence" value="ECO:0007669"/>
    <property type="project" value="TreeGrafter"/>
</dbReference>
<dbReference type="FunFam" id="2.30.30.30:FF:000001">
    <property type="entry name" value="50S ribosomal protein L2"/>
    <property type="match status" value="1"/>
</dbReference>
<dbReference type="FunFam" id="2.40.50.140:FF:000003">
    <property type="entry name" value="50S ribosomal protein L2"/>
    <property type="match status" value="1"/>
</dbReference>
<dbReference type="FunFam" id="4.10.950.10:FF:000001">
    <property type="entry name" value="50S ribosomal protein L2"/>
    <property type="match status" value="1"/>
</dbReference>
<dbReference type="Gene3D" id="2.30.30.30">
    <property type="match status" value="1"/>
</dbReference>
<dbReference type="Gene3D" id="2.40.50.140">
    <property type="entry name" value="Nucleic acid-binding proteins"/>
    <property type="match status" value="1"/>
</dbReference>
<dbReference type="Gene3D" id="4.10.950.10">
    <property type="entry name" value="Ribosomal protein L2, domain 3"/>
    <property type="match status" value="1"/>
</dbReference>
<dbReference type="HAMAP" id="MF_01320_B">
    <property type="entry name" value="Ribosomal_uL2_B"/>
    <property type="match status" value="1"/>
</dbReference>
<dbReference type="InterPro" id="IPR012340">
    <property type="entry name" value="NA-bd_OB-fold"/>
</dbReference>
<dbReference type="InterPro" id="IPR014722">
    <property type="entry name" value="Rib_uL2_dom2"/>
</dbReference>
<dbReference type="InterPro" id="IPR002171">
    <property type="entry name" value="Ribosomal_uL2"/>
</dbReference>
<dbReference type="InterPro" id="IPR005880">
    <property type="entry name" value="Ribosomal_uL2_bac/org-type"/>
</dbReference>
<dbReference type="InterPro" id="IPR022669">
    <property type="entry name" value="Ribosomal_uL2_C"/>
</dbReference>
<dbReference type="InterPro" id="IPR022671">
    <property type="entry name" value="Ribosomal_uL2_CS"/>
</dbReference>
<dbReference type="InterPro" id="IPR014726">
    <property type="entry name" value="Ribosomal_uL2_dom3"/>
</dbReference>
<dbReference type="InterPro" id="IPR022666">
    <property type="entry name" value="Ribosomal_uL2_RNA-bd_dom"/>
</dbReference>
<dbReference type="InterPro" id="IPR008991">
    <property type="entry name" value="Translation_prot_SH3-like_sf"/>
</dbReference>
<dbReference type="NCBIfam" id="TIGR01171">
    <property type="entry name" value="rplB_bact"/>
    <property type="match status" value="1"/>
</dbReference>
<dbReference type="PANTHER" id="PTHR13691:SF5">
    <property type="entry name" value="LARGE RIBOSOMAL SUBUNIT PROTEIN UL2M"/>
    <property type="match status" value="1"/>
</dbReference>
<dbReference type="PANTHER" id="PTHR13691">
    <property type="entry name" value="RIBOSOMAL PROTEIN L2"/>
    <property type="match status" value="1"/>
</dbReference>
<dbReference type="Pfam" id="PF00181">
    <property type="entry name" value="Ribosomal_L2"/>
    <property type="match status" value="1"/>
</dbReference>
<dbReference type="Pfam" id="PF03947">
    <property type="entry name" value="Ribosomal_L2_C"/>
    <property type="match status" value="1"/>
</dbReference>
<dbReference type="PIRSF" id="PIRSF002158">
    <property type="entry name" value="Ribosomal_L2"/>
    <property type="match status" value="1"/>
</dbReference>
<dbReference type="SMART" id="SM01383">
    <property type="entry name" value="Ribosomal_L2"/>
    <property type="match status" value="1"/>
</dbReference>
<dbReference type="SMART" id="SM01382">
    <property type="entry name" value="Ribosomal_L2_C"/>
    <property type="match status" value="1"/>
</dbReference>
<dbReference type="SUPFAM" id="SSF50249">
    <property type="entry name" value="Nucleic acid-binding proteins"/>
    <property type="match status" value="1"/>
</dbReference>
<dbReference type="SUPFAM" id="SSF50104">
    <property type="entry name" value="Translation proteins SH3-like domain"/>
    <property type="match status" value="1"/>
</dbReference>
<dbReference type="PROSITE" id="PS00467">
    <property type="entry name" value="RIBOSOMAL_L2"/>
    <property type="match status" value="1"/>
</dbReference>
<name>RL2_RALN1</name>
<reference key="1">
    <citation type="journal article" date="2002" name="Nature">
        <title>Genome sequence of the plant pathogen Ralstonia solanacearum.</title>
        <authorList>
            <person name="Salanoubat M."/>
            <person name="Genin S."/>
            <person name="Artiguenave F."/>
            <person name="Gouzy J."/>
            <person name="Mangenot S."/>
            <person name="Arlat M."/>
            <person name="Billault A."/>
            <person name="Brottier P."/>
            <person name="Camus J.-C."/>
            <person name="Cattolico L."/>
            <person name="Chandler M."/>
            <person name="Choisne N."/>
            <person name="Claudel-Renard C."/>
            <person name="Cunnac S."/>
            <person name="Demange N."/>
            <person name="Gaspin C."/>
            <person name="Lavie M."/>
            <person name="Moisan A."/>
            <person name="Robert C."/>
            <person name="Saurin W."/>
            <person name="Schiex T."/>
            <person name="Siguier P."/>
            <person name="Thebault P."/>
            <person name="Whalen M."/>
            <person name="Wincker P."/>
            <person name="Levy M."/>
            <person name="Weissenbach J."/>
            <person name="Boucher C.A."/>
        </authorList>
    </citation>
    <scope>NUCLEOTIDE SEQUENCE [LARGE SCALE GENOMIC DNA]</scope>
    <source>
        <strain>ATCC BAA-1114 / GMI1000</strain>
    </source>
</reference>
<evidence type="ECO:0000255" key="1">
    <source>
        <dbReference type="HAMAP-Rule" id="MF_01320"/>
    </source>
</evidence>
<evidence type="ECO:0000256" key="2">
    <source>
        <dbReference type="SAM" id="MobiDB-lite"/>
    </source>
</evidence>
<evidence type="ECO:0000305" key="3"/>
<proteinExistence type="inferred from homology"/>
<organism>
    <name type="scientific">Ralstonia nicotianae (strain ATCC BAA-1114 / GMI1000)</name>
    <name type="common">Ralstonia solanacearum</name>
    <dbReference type="NCBI Taxonomy" id="267608"/>
    <lineage>
        <taxon>Bacteria</taxon>
        <taxon>Pseudomonadati</taxon>
        <taxon>Pseudomonadota</taxon>
        <taxon>Betaproteobacteria</taxon>
        <taxon>Burkholderiales</taxon>
        <taxon>Burkholderiaceae</taxon>
        <taxon>Ralstonia</taxon>
        <taxon>Ralstonia solanacearum species complex</taxon>
    </lineage>
</organism>
<keyword id="KW-1185">Reference proteome</keyword>
<keyword id="KW-0687">Ribonucleoprotein</keyword>
<keyword id="KW-0689">Ribosomal protein</keyword>
<keyword id="KW-0694">RNA-binding</keyword>
<keyword id="KW-0699">rRNA-binding</keyword>
<feature type="chain" id="PRO_0000129602" description="Large ribosomal subunit protein uL2">
    <location>
        <begin position="1"/>
        <end position="276"/>
    </location>
</feature>
<feature type="region of interest" description="Disordered" evidence="2">
    <location>
        <begin position="37"/>
        <end position="59"/>
    </location>
</feature>
<feature type="region of interest" description="Disordered" evidence="2">
    <location>
        <begin position="224"/>
        <end position="276"/>
    </location>
</feature>
<feature type="compositionally biased region" description="Basic residues" evidence="2">
    <location>
        <begin position="50"/>
        <end position="59"/>
    </location>
</feature>
<accession>Q8XV15</accession>
<gene>
    <name evidence="1" type="primary">rplB</name>
    <name type="ordered locus">RSc3016</name>
    <name type="ORF">RS04741</name>
</gene>